<organism>
    <name type="scientific">Homo sapiens</name>
    <name type="common">Human</name>
    <dbReference type="NCBI Taxonomy" id="9606"/>
    <lineage>
        <taxon>Eukaryota</taxon>
        <taxon>Metazoa</taxon>
        <taxon>Chordata</taxon>
        <taxon>Craniata</taxon>
        <taxon>Vertebrata</taxon>
        <taxon>Euteleostomi</taxon>
        <taxon>Mammalia</taxon>
        <taxon>Eutheria</taxon>
        <taxon>Euarchontoglires</taxon>
        <taxon>Primates</taxon>
        <taxon>Haplorrhini</taxon>
        <taxon>Catarrhini</taxon>
        <taxon>Hominidae</taxon>
        <taxon>Homo</taxon>
    </lineage>
</organism>
<keyword id="KW-0025">Alternative splicing</keyword>
<keyword id="KW-0472">Membrane</keyword>
<keyword id="KW-1267">Proteomics identification</keyword>
<keyword id="KW-0675">Receptor</keyword>
<keyword id="KW-1185">Reference proteome</keyword>
<keyword id="KW-0812">Transmembrane</keyword>
<keyword id="KW-1133">Transmembrane helix</keyword>
<name>M4A6A_HUMAN</name>
<reference key="1">
    <citation type="journal article" date="2001" name="Gene">
        <title>Identification of a new multigene four-transmembrane family (MS4A) related to CD20, HTm4 and beta subunit of the high-affinity IgE receptor.</title>
        <authorList>
            <person name="Ishibashi K."/>
            <person name="Suzuki M."/>
            <person name="Sasaki S."/>
            <person name="Imai M."/>
        </authorList>
    </citation>
    <scope>NUCLEOTIDE SEQUENCE [MRNA] (ISOFORM 3)</scope>
</reference>
<reference key="2">
    <citation type="journal article" date="2001" name="Genomics">
        <title>Identification of a CD20-, Fc-epsilon-RI-beta-, and HTm4-related gene family: sixteen new MS4A family members expressed in human and mouse.</title>
        <authorList>
            <person name="Liang Y."/>
            <person name="Tedder T.F."/>
        </authorList>
    </citation>
    <scope>NUCLEOTIDE SEQUENCE [MRNA] (ISOFORM 1)</scope>
    <scope>VARIANTS SER-183 AND SER-185</scope>
    <source>
        <tissue>Liver</tissue>
        <tissue>Spleen</tissue>
    </source>
</reference>
<reference key="3">
    <citation type="journal article" date="2001" name="Immunogenetics">
        <title>Structural organization of the human MS4A gene cluster on chromosome 11q12.</title>
        <authorList>
            <person name="Liang Y."/>
            <person name="Buckley T.R."/>
            <person name="Tu L."/>
            <person name="Langdon S.D."/>
            <person name="Tedder T.F."/>
        </authorList>
    </citation>
    <scope>NUCLEOTIDE SEQUENCE [MRNA] (ISOFORM 2)</scope>
    <source>
        <tissue>Fetal liver</tissue>
    </source>
</reference>
<reference key="4">
    <citation type="submission" date="1999-04" db="EMBL/GenBank/DDBJ databases">
        <title>Novel human CD20-like molecule.</title>
        <authorList>
            <person name="Zhang W."/>
            <person name="Wan T."/>
            <person name="He L."/>
            <person name="Yuan Z."/>
            <person name="Cao X."/>
        </authorList>
    </citation>
    <scope>NUCLEOTIDE SEQUENCE [MRNA] (ISOFORM 2)</scope>
</reference>
<reference key="5">
    <citation type="submission" date="2000-05" db="EMBL/GenBank/DDBJ databases">
        <authorList>
            <person name="Xu X."/>
            <person name="Yang Y."/>
            <person name="Gao G."/>
            <person name="Xiao H."/>
            <person name="Chen Z."/>
            <person name="Han Z."/>
        </authorList>
    </citation>
    <scope>NUCLEOTIDE SEQUENCE [MRNA] (ISOFORM 1)</scope>
    <source>
        <tissue>Dendritic cell</tissue>
    </source>
</reference>
<reference key="6">
    <citation type="submission" date="2001-02" db="EMBL/GenBank/DDBJ databases">
        <title>Isolation of a family of hematopoietic-expressed four-transmembrane genes related to CD20 and Fc-epsilon-RI-beta.</title>
        <authorList>
            <person name="Hulett M.D."/>
            <person name="Pagler E."/>
            <person name="Hogarth P.M."/>
            <person name="Eyre H.J."/>
            <person name="Baker E."/>
            <person name="Crawford J."/>
            <person name="Sutherland G.R."/>
            <person name="Parish C.R."/>
        </authorList>
    </citation>
    <scope>NUCLEOTIDE SEQUENCE [MRNA] (ISOFORMS 1 AND 2)</scope>
</reference>
<reference key="7">
    <citation type="submission" date="1999-07" db="EMBL/GenBank/DDBJ databases">
        <authorList>
            <person name="Qin B.M."/>
            <person name="Liu B."/>
            <person name="Sheng H."/>
            <person name="Zhang Q."/>
            <person name="Liu Y.Q."/>
            <person name="Zhao B."/>
            <person name="Wang X.Y."/>
            <person name="Song L."/>
            <person name="Gao Y."/>
            <person name="Zhang C.L."/>
            <person name="Ye J."/>
            <person name="Ji X.J."/>
            <person name="Liu B.H."/>
            <person name="Lu H."/>
            <person name="Xu H.S."/>
            <person name="Chen J.Z."/>
            <person name="Cai M.Q."/>
            <person name="Zheng W.Y."/>
            <person name="Teng C.Y."/>
            <person name="Liu Q."/>
            <person name="Yu L.T."/>
            <person name="Lin J."/>
            <person name="Gong J."/>
            <person name="Zhang A.M."/>
            <person name="Gao R.L."/>
            <person name="Hui R.T."/>
        </authorList>
    </citation>
    <scope>NUCLEOTIDE SEQUENCE [LARGE SCALE MRNA] (ISOFORM 4)</scope>
    <source>
        <tissue>Aorta</tissue>
    </source>
</reference>
<reference key="8">
    <citation type="submission" date="1999-12" db="EMBL/GenBank/DDBJ databases">
        <title>A novel gene expressed in human pheochromocytoma.</title>
        <authorList>
            <person name="Li Y."/>
            <person name="Huang Q."/>
            <person name="Peng Y."/>
            <person name="Song H."/>
            <person name="Yu Y."/>
            <person name="Xu S."/>
            <person name="Ren S."/>
            <person name="Chen Z."/>
            <person name="Han Z."/>
        </authorList>
    </citation>
    <scope>NUCLEOTIDE SEQUENCE [LARGE SCALE MRNA] (ISOFORM 1)</scope>
    <source>
        <tissue>Pheochromocytoma</tissue>
    </source>
</reference>
<reference key="9">
    <citation type="journal article" date="2004" name="Nat. Genet.">
        <title>Complete sequencing and characterization of 21,243 full-length human cDNAs.</title>
        <authorList>
            <person name="Ota T."/>
            <person name="Suzuki Y."/>
            <person name="Nishikawa T."/>
            <person name="Otsuki T."/>
            <person name="Sugiyama T."/>
            <person name="Irie R."/>
            <person name="Wakamatsu A."/>
            <person name="Hayashi K."/>
            <person name="Sato H."/>
            <person name="Nagai K."/>
            <person name="Kimura K."/>
            <person name="Makita H."/>
            <person name="Sekine M."/>
            <person name="Obayashi M."/>
            <person name="Nishi T."/>
            <person name="Shibahara T."/>
            <person name="Tanaka T."/>
            <person name="Ishii S."/>
            <person name="Yamamoto J."/>
            <person name="Saito K."/>
            <person name="Kawai Y."/>
            <person name="Isono Y."/>
            <person name="Nakamura Y."/>
            <person name="Nagahari K."/>
            <person name="Murakami K."/>
            <person name="Yasuda T."/>
            <person name="Iwayanagi T."/>
            <person name="Wagatsuma M."/>
            <person name="Shiratori A."/>
            <person name="Sudo H."/>
            <person name="Hosoiri T."/>
            <person name="Kaku Y."/>
            <person name="Kodaira H."/>
            <person name="Kondo H."/>
            <person name="Sugawara M."/>
            <person name="Takahashi M."/>
            <person name="Kanda K."/>
            <person name="Yokoi T."/>
            <person name="Furuya T."/>
            <person name="Kikkawa E."/>
            <person name="Omura Y."/>
            <person name="Abe K."/>
            <person name="Kamihara K."/>
            <person name="Katsuta N."/>
            <person name="Sato K."/>
            <person name="Tanikawa M."/>
            <person name="Yamazaki M."/>
            <person name="Ninomiya K."/>
            <person name="Ishibashi T."/>
            <person name="Yamashita H."/>
            <person name="Murakawa K."/>
            <person name="Fujimori K."/>
            <person name="Tanai H."/>
            <person name="Kimata M."/>
            <person name="Watanabe M."/>
            <person name="Hiraoka S."/>
            <person name="Chiba Y."/>
            <person name="Ishida S."/>
            <person name="Ono Y."/>
            <person name="Takiguchi S."/>
            <person name="Watanabe S."/>
            <person name="Yosida M."/>
            <person name="Hotuta T."/>
            <person name="Kusano J."/>
            <person name="Kanehori K."/>
            <person name="Takahashi-Fujii A."/>
            <person name="Hara H."/>
            <person name="Tanase T.-O."/>
            <person name="Nomura Y."/>
            <person name="Togiya S."/>
            <person name="Komai F."/>
            <person name="Hara R."/>
            <person name="Takeuchi K."/>
            <person name="Arita M."/>
            <person name="Imose N."/>
            <person name="Musashino K."/>
            <person name="Yuuki H."/>
            <person name="Oshima A."/>
            <person name="Sasaki N."/>
            <person name="Aotsuka S."/>
            <person name="Yoshikawa Y."/>
            <person name="Matsunawa H."/>
            <person name="Ichihara T."/>
            <person name="Shiohata N."/>
            <person name="Sano S."/>
            <person name="Moriya S."/>
            <person name="Momiyama H."/>
            <person name="Satoh N."/>
            <person name="Takami S."/>
            <person name="Terashima Y."/>
            <person name="Suzuki O."/>
            <person name="Nakagawa S."/>
            <person name="Senoh A."/>
            <person name="Mizoguchi H."/>
            <person name="Goto Y."/>
            <person name="Shimizu F."/>
            <person name="Wakebe H."/>
            <person name="Hishigaki H."/>
            <person name="Watanabe T."/>
            <person name="Sugiyama A."/>
            <person name="Takemoto M."/>
            <person name="Kawakami B."/>
            <person name="Yamazaki M."/>
            <person name="Watanabe K."/>
            <person name="Kumagai A."/>
            <person name="Itakura S."/>
            <person name="Fukuzumi Y."/>
            <person name="Fujimori Y."/>
            <person name="Komiyama M."/>
            <person name="Tashiro H."/>
            <person name="Tanigami A."/>
            <person name="Fujiwara T."/>
            <person name="Ono T."/>
            <person name="Yamada K."/>
            <person name="Fujii Y."/>
            <person name="Ozaki K."/>
            <person name="Hirao M."/>
            <person name="Ohmori Y."/>
            <person name="Kawabata A."/>
            <person name="Hikiji T."/>
            <person name="Kobatake N."/>
            <person name="Inagaki H."/>
            <person name="Ikema Y."/>
            <person name="Okamoto S."/>
            <person name="Okitani R."/>
            <person name="Kawakami T."/>
            <person name="Noguchi S."/>
            <person name="Itoh T."/>
            <person name="Shigeta K."/>
            <person name="Senba T."/>
            <person name="Matsumura K."/>
            <person name="Nakajima Y."/>
            <person name="Mizuno T."/>
            <person name="Morinaga M."/>
            <person name="Sasaki M."/>
            <person name="Togashi T."/>
            <person name="Oyama M."/>
            <person name="Hata H."/>
            <person name="Watanabe M."/>
            <person name="Komatsu T."/>
            <person name="Mizushima-Sugano J."/>
            <person name="Satoh T."/>
            <person name="Shirai Y."/>
            <person name="Takahashi Y."/>
            <person name="Nakagawa K."/>
            <person name="Okumura K."/>
            <person name="Nagase T."/>
            <person name="Nomura N."/>
            <person name="Kikuchi H."/>
            <person name="Masuho Y."/>
            <person name="Yamashita R."/>
            <person name="Nakai K."/>
            <person name="Yada T."/>
            <person name="Nakamura Y."/>
            <person name="Ohara O."/>
            <person name="Isogai T."/>
            <person name="Sugano S."/>
        </authorList>
    </citation>
    <scope>NUCLEOTIDE SEQUENCE [LARGE SCALE MRNA] (ISOFORM 1)</scope>
    <source>
        <tissue>Skeletal muscle</tissue>
    </source>
</reference>
<reference key="10">
    <citation type="journal article" date="2006" name="Nature">
        <title>Human chromosome 11 DNA sequence and analysis including novel gene identification.</title>
        <authorList>
            <person name="Taylor T.D."/>
            <person name="Noguchi H."/>
            <person name="Totoki Y."/>
            <person name="Toyoda A."/>
            <person name="Kuroki Y."/>
            <person name="Dewar K."/>
            <person name="Lloyd C."/>
            <person name="Itoh T."/>
            <person name="Takeda T."/>
            <person name="Kim D.-W."/>
            <person name="She X."/>
            <person name="Barlow K.F."/>
            <person name="Bloom T."/>
            <person name="Bruford E."/>
            <person name="Chang J.L."/>
            <person name="Cuomo C.A."/>
            <person name="Eichler E."/>
            <person name="FitzGerald M.G."/>
            <person name="Jaffe D.B."/>
            <person name="LaButti K."/>
            <person name="Nicol R."/>
            <person name="Park H.-S."/>
            <person name="Seaman C."/>
            <person name="Sougnez C."/>
            <person name="Yang X."/>
            <person name="Zimmer A.R."/>
            <person name="Zody M.C."/>
            <person name="Birren B.W."/>
            <person name="Nusbaum C."/>
            <person name="Fujiyama A."/>
            <person name="Hattori M."/>
            <person name="Rogers J."/>
            <person name="Lander E.S."/>
            <person name="Sakaki Y."/>
        </authorList>
    </citation>
    <scope>NUCLEOTIDE SEQUENCE [LARGE SCALE GENOMIC DNA]</scope>
</reference>
<reference key="11">
    <citation type="submission" date="2005-07" db="EMBL/GenBank/DDBJ databases">
        <authorList>
            <person name="Mural R.J."/>
            <person name="Istrail S."/>
            <person name="Sutton G.G."/>
            <person name="Florea L."/>
            <person name="Halpern A.L."/>
            <person name="Mobarry C.M."/>
            <person name="Lippert R."/>
            <person name="Walenz B."/>
            <person name="Shatkay H."/>
            <person name="Dew I."/>
            <person name="Miller J.R."/>
            <person name="Flanigan M.J."/>
            <person name="Edwards N.J."/>
            <person name="Bolanos R."/>
            <person name="Fasulo D."/>
            <person name="Halldorsson B.V."/>
            <person name="Hannenhalli S."/>
            <person name="Turner R."/>
            <person name="Yooseph S."/>
            <person name="Lu F."/>
            <person name="Nusskern D.R."/>
            <person name="Shue B.C."/>
            <person name="Zheng X.H."/>
            <person name="Zhong F."/>
            <person name="Delcher A.L."/>
            <person name="Huson D.H."/>
            <person name="Kravitz S.A."/>
            <person name="Mouchard L."/>
            <person name="Reinert K."/>
            <person name="Remington K.A."/>
            <person name="Clark A.G."/>
            <person name="Waterman M.S."/>
            <person name="Eichler E.E."/>
            <person name="Adams M.D."/>
            <person name="Hunkapiller M.W."/>
            <person name="Myers E.W."/>
            <person name="Venter J.C."/>
        </authorList>
    </citation>
    <scope>NUCLEOTIDE SEQUENCE [LARGE SCALE GENOMIC DNA]</scope>
</reference>
<reference key="12">
    <citation type="journal article" date="2004" name="Genome Res.">
        <title>The status, quality, and expansion of the NIH full-length cDNA project: the Mammalian Gene Collection (MGC).</title>
        <authorList>
            <consortium name="The MGC Project Team"/>
        </authorList>
    </citation>
    <scope>NUCLEOTIDE SEQUENCE [LARGE SCALE MRNA] (ISOFORM 1)</scope>
    <source>
        <tissue>Skeletal muscle</tissue>
    </source>
</reference>
<comment type="function">
    <text>May be involved in signal transduction as a component of a multimeric receptor complex.</text>
</comment>
<comment type="interaction">
    <interactant intactId="EBI-1266965">
        <id>Q9H2W1</id>
    </interactant>
    <interactant intactId="EBI-13067820">
        <id>Q9NZD1</id>
        <label>GPRC5D</label>
    </interactant>
    <organismsDiffer>false</organismsDiffer>
    <experiments>3</experiments>
</comment>
<comment type="subcellular location">
    <subcellularLocation>
        <location>Membrane</location>
        <topology>Multi-pass membrane protein</topology>
    </subcellularLocation>
</comment>
<comment type="alternative products">
    <event type="alternative splicing"/>
    <isoform>
        <id>Q9H2W1-1</id>
        <name>1</name>
        <name>3.1</name>
        <sequence type="displayed"/>
    </isoform>
    <isoform>
        <id>Q9H2W1-2</id>
        <name>2</name>
        <name>3.2</name>
        <sequence type="described" ref="VSP_007381 VSP_007382"/>
    </isoform>
    <isoform>
        <id>Q9H2W1-3</id>
        <name>3</name>
        <sequence type="described" ref="VSP_007383 VSP_007384"/>
    </isoform>
    <isoform>
        <id>Q9H2W1-4</id>
        <name>4</name>
        <sequence type="described" ref="VSP_041191 VSP_041192"/>
    </isoform>
    <isoform>
        <id>Q9H2W1-5</id>
        <name>5</name>
        <sequence type="described" ref="VSP_056732 VSP_007381 VSP_007382"/>
    </isoform>
</comment>
<comment type="tissue specificity">
    <text>Variable expression in some B-cell, myelomonocytic, and erythroleukemia cell lines.</text>
</comment>
<comment type="similarity">
    <text evidence="8">Belongs to the MS4A family.</text>
</comment>
<comment type="sequence caution" evidence="8">
    <conflict type="frameshift">
        <sequence resource="EMBL-CDS" id="AAG44626"/>
    </conflict>
</comment>
<comment type="sequence caution" evidence="8">
    <conflict type="frameshift">
        <sequence resource="EMBL-CDS" id="AAG44672"/>
    </conflict>
</comment>
<evidence type="ECO:0000255" key="1"/>
<evidence type="ECO:0000269" key="2">
    <source>
    </source>
</evidence>
<evidence type="ECO:0000303" key="3">
    <source>
    </source>
</evidence>
<evidence type="ECO:0000303" key="4">
    <source>
    </source>
</evidence>
<evidence type="ECO:0000303" key="5">
    <source ref="4"/>
</evidence>
<evidence type="ECO:0000303" key="6">
    <source ref="6"/>
</evidence>
<evidence type="ECO:0000303" key="7">
    <source ref="7"/>
</evidence>
<evidence type="ECO:0000305" key="8"/>
<dbReference type="EMBL" id="AB013104">
    <property type="protein sequence ID" value="BAB18740.1"/>
    <property type="molecule type" value="mRNA"/>
</dbReference>
<dbReference type="EMBL" id="AF237908">
    <property type="protein sequence ID" value="AAK37417.1"/>
    <property type="molecule type" value="mRNA"/>
</dbReference>
<dbReference type="EMBL" id="AF286866">
    <property type="protein sequence ID" value="AAK37994.1"/>
    <property type="molecule type" value="mRNA"/>
</dbReference>
<dbReference type="EMBL" id="AF354930">
    <property type="protein sequence ID" value="AAL07357.1"/>
    <property type="molecule type" value="mRNA"/>
</dbReference>
<dbReference type="EMBL" id="AF142409">
    <property type="protein sequence ID" value="AAG27920.1"/>
    <property type="molecule type" value="mRNA"/>
</dbReference>
<dbReference type="EMBL" id="AF253977">
    <property type="protein sequence ID" value="AAG44626.1"/>
    <property type="status" value="ALT_FRAME"/>
    <property type="molecule type" value="mRNA"/>
</dbReference>
<dbReference type="EMBL" id="AF261136">
    <property type="protein sequence ID" value="AAG44672.1"/>
    <property type="status" value="ALT_FRAME"/>
    <property type="molecule type" value="mRNA"/>
</dbReference>
<dbReference type="EMBL" id="AF350502">
    <property type="protein sequence ID" value="AAL56222.1"/>
    <property type="molecule type" value="mRNA"/>
</dbReference>
<dbReference type="EMBL" id="AF350503">
    <property type="protein sequence ID" value="AAL56223.1"/>
    <property type="molecule type" value="mRNA"/>
</dbReference>
<dbReference type="EMBL" id="AF172819">
    <property type="protein sequence ID" value="AAQ13613.1"/>
    <property type="molecule type" value="mRNA"/>
</dbReference>
<dbReference type="EMBL" id="AF212240">
    <property type="protein sequence ID" value="AAG41780.1"/>
    <property type="molecule type" value="mRNA"/>
</dbReference>
<dbReference type="EMBL" id="AK291870">
    <property type="protein sequence ID" value="BAF84559.1"/>
    <property type="molecule type" value="mRNA"/>
</dbReference>
<dbReference type="EMBL" id="AP003970">
    <property type="status" value="NOT_ANNOTATED_CDS"/>
    <property type="molecule type" value="Genomic_DNA"/>
</dbReference>
<dbReference type="EMBL" id="CH471076">
    <property type="protein sequence ID" value="EAW73867.1"/>
    <property type="molecule type" value="Genomic_DNA"/>
</dbReference>
<dbReference type="EMBL" id="BC022854">
    <property type="protein sequence ID" value="AAH22854.1"/>
    <property type="molecule type" value="mRNA"/>
</dbReference>
<dbReference type="CCDS" id="CCDS44615.1">
    <molecule id="Q9H2W1-2"/>
</dbReference>
<dbReference type="CCDS" id="CCDS44616.1">
    <molecule id="Q9H2W1-3"/>
</dbReference>
<dbReference type="CCDS" id="CCDS58134.1">
    <molecule id="Q9H2W1-5"/>
</dbReference>
<dbReference type="CCDS" id="CCDS7981.1">
    <molecule id="Q9H2W1-1"/>
</dbReference>
<dbReference type="RefSeq" id="NP_001234928.1">
    <molecule id="Q9H2W1-5"/>
    <property type="nucleotide sequence ID" value="NM_001247999.2"/>
</dbReference>
<dbReference type="RefSeq" id="NP_071744.2">
    <molecule id="Q9H2W1-2"/>
    <property type="nucleotide sequence ID" value="NM_022349.3"/>
</dbReference>
<dbReference type="RefSeq" id="NP_690590.1">
    <molecule id="Q9H2W1-3"/>
    <property type="nucleotide sequence ID" value="NM_152851.2"/>
</dbReference>
<dbReference type="RefSeq" id="NP_690591.1">
    <molecule id="Q9H2W1-1"/>
    <property type="nucleotide sequence ID" value="NM_152852.3"/>
</dbReference>
<dbReference type="SMR" id="Q9H2W1"/>
<dbReference type="BioGRID" id="122119">
    <property type="interactions" value="5"/>
</dbReference>
<dbReference type="FunCoup" id="Q9H2W1">
    <property type="interactions" value="93"/>
</dbReference>
<dbReference type="IntAct" id="Q9H2W1">
    <property type="interactions" value="7"/>
</dbReference>
<dbReference type="STRING" id="9606.ENSP00000435844"/>
<dbReference type="iPTMnet" id="Q9H2W1"/>
<dbReference type="PhosphoSitePlus" id="Q9H2W1"/>
<dbReference type="BioMuta" id="MS4A6A"/>
<dbReference type="DMDM" id="30580461"/>
<dbReference type="MassIVE" id="Q9H2W1"/>
<dbReference type="PaxDb" id="9606-ENSP00000392770"/>
<dbReference type="PeptideAtlas" id="Q9H2W1"/>
<dbReference type="ProteomicsDB" id="30338"/>
<dbReference type="ProteomicsDB" id="80605">
    <molecule id="Q9H2W1-1"/>
</dbReference>
<dbReference type="ProteomicsDB" id="80606">
    <molecule id="Q9H2W1-2"/>
</dbReference>
<dbReference type="ProteomicsDB" id="80607">
    <molecule id="Q9H2W1-3"/>
</dbReference>
<dbReference type="ProteomicsDB" id="80608">
    <molecule id="Q9H2W1-4"/>
</dbReference>
<dbReference type="Antibodypedia" id="27866">
    <property type="antibodies" value="183 antibodies from 27 providers"/>
</dbReference>
<dbReference type="DNASU" id="64231"/>
<dbReference type="Ensembl" id="ENST00000412309.6">
    <molecule id="Q9H2W1-5"/>
    <property type="protein sequence ID" value="ENSP00000403212.2"/>
    <property type="gene ID" value="ENSG00000110077.16"/>
</dbReference>
<dbReference type="Ensembl" id="ENST00000420732.6">
    <molecule id="Q9H2W1-3"/>
    <property type="protein sequence ID" value="ENSP00000392921.2"/>
    <property type="gene ID" value="ENSG00000110077.16"/>
</dbReference>
<dbReference type="Ensembl" id="ENST00000426738.6">
    <molecule id="Q9H2W1-5"/>
    <property type="protein sequence ID" value="ENSP00000392770.3"/>
    <property type="gene ID" value="ENSG00000110077.16"/>
</dbReference>
<dbReference type="Ensembl" id="ENST00000528851.6">
    <molecule id="Q9H2W1-2"/>
    <property type="protein sequence ID" value="ENSP00000431901.1"/>
    <property type="gene ID" value="ENSG00000110077.16"/>
</dbReference>
<dbReference type="Ensembl" id="ENST00000530839.6">
    <molecule id="Q9H2W1-1"/>
    <property type="protein sequence ID" value="ENSP00000436979.1"/>
    <property type="gene ID" value="ENSG00000110077.16"/>
</dbReference>
<dbReference type="Ensembl" id="ENST00000532169.5">
    <molecule id="Q9H2W1-4"/>
    <property type="protein sequence ID" value="ENSP00000431266.1"/>
    <property type="gene ID" value="ENSG00000110077.16"/>
</dbReference>
<dbReference type="GeneID" id="64231"/>
<dbReference type="KEGG" id="hsa:64231"/>
<dbReference type="MANE-Select" id="ENST00000528851.6">
    <molecule id="Q9H2W1-2"/>
    <property type="protein sequence ID" value="ENSP00000431901.1"/>
    <property type="RefSeq nucleotide sequence ID" value="NM_022349.4"/>
    <property type="RefSeq protein sequence ID" value="NP_071744.2"/>
</dbReference>
<dbReference type="UCSC" id="uc001noq.4">
    <molecule id="Q9H2W1-1"/>
    <property type="organism name" value="human"/>
</dbReference>
<dbReference type="AGR" id="HGNC:13375"/>
<dbReference type="CTD" id="64231"/>
<dbReference type="DisGeNET" id="64231"/>
<dbReference type="GeneCards" id="MS4A6A"/>
<dbReference type="HGNC" id="HGNC:13375">
    <property type="gene designation" value="MS4A6A"/>
</dbReference>
<dbReference type="HPA" id="ENSG00000110077">
    <property type="expression patterns" value="Low tissue specificity"/>
</dbReference>
<dbReference type="MIM" id="606548">
    <property type="type" value="gene"/>
</dbReference>
<dbReference type="neXtProt" id="NX_Q9H2W1"/>
<dbReference type="OpenTargets" id="ENSG00000110077"/>
<dbReference type="PharmGKB" id="PA31119"/>
<dbReference type="VEuPathDB" id="HostDB:ENSG00000110077"/>
<dbReference type="eggNOG" id="ENOG502SUQB">
    <property type="taxonomic scope" value="Eukaryota"/>
</dbReference>
<dbReference type="GeneTree" id="ENSGT00940000163439"/>
<dbReference type="HOGENOM" id="CLU_089673_1_0_1"/>
<dbReference type="InParanoid" id="Q9H2W1"/>
<dbReference type="OrthoDB" id="9482647at2759"/>
<dbReference type="PAN-GO" id="Q9H2W1">
    <property type="GO annotations" value="3 GO annotations based on evolutionary models"/>
</dbReference>
<dbReference type="PhylomeDB" id="Q9H2W1"/>
<dbReference type="TreeFam" id="TF335157"/>
<dbReference type="PathwayCommons" id="Q9H2W1"/>
<dbReference type="SignaLink" id="Q9H2W1"/>
<dbReference type="BioGRID-ORCS" id="64231">
    <property type="hits" value="20 hits in 1151 CRISPR screens"/>
</dbReference>
<dbReference type="ChiTaRS" id="MS4A6A">
    <property type="organism name" value="human"/>
</dbReference>
<dbReference type="GenomeRNAi" id="64231"/>
<dbReference type="Pharos" id="Q9H2W1">
    <property type="development level" value="Tbio"/>
</dbReference>
<dbReference type="PRO" id="PR:Q9H2W1"/>
<dbReference type="Proteomes" id="UP000005640">
    <property type="component" value="Chromosome 11"/>
</dbReference>
<dbReference type="RNAct" id="Q9H2W1">
    <property type="molecule type" value="protein"/>
</dbReference>
<dbReference type="Bgee" id="ENSG00000110077">
    <property type="expression patterns" value="Expressed in monocyte and 185 other cell types or tissues"/>
</dbReference>
<dbReference type="ExpressionAtlas" id="Q9H2W1">
    <property type="expression patterns" value="baseline and differential"/>
</dbReference>
<dbReference type="GO" id="GO:0005886">
    <property type="term" value="C:plasma membrane"/>
    <property type="evidence" value="ECO:0000318"/>
    <property type="project" value="GO_Central"/>
</dbReference>
<dbReference type="GO" id="GO:0005802">
    <property type="term" value="C:trans-Golgi network"/>
    <property type="evidence" value="ECO:0000314"/>
    <property type="project" value="ARUK-UCL"/>
</dbReference>
<dbReference type="GO" id="GO:0007166">
    <property type="term" value="P:cell surface receptor signaling pathway"/>
    <property type="evidence" value="ECO:0000318"/>
    <property type="project" value="GO_Central"/>
</dbReference>
<dbReference type="InterPro" id="IPR007237">
    <property type="entry name" value="CD20-like"/>
</dbReference>
<dbReference type="InterPro" id="IPR030417">
    <property type="entry name" value="MS4A"/>
</dbReference>
<dbReference type="PANTHER" id="PTHR23320:SF135">
    <property type="entry name" value="MEMBRANE-SPANNING 4-DOMAINS SUBFAMILY A MEMBER 6A"/>
    <property type="match status" value="1"/>
</dbReference>
<dbReference type="PANTHER" id="PTHR23320">
    <property type="entry name" value="MEMBRANE-SPANNING 4-DOMAINS SUBFAMILY A MS4A -RELATED"/>
    <property type="match status" value="1"/>
</dbReference>
<dbReference type="Pfam" id="PF04103">
    <property type="entry name" value="CD20"/>
    <property type="match status" value="1"/>
</dbReference>
<protein>
    <recommendedName>
        <fullName>Membrane-spanning 4-domains subfamily A member 6A</fullName>
    </recommendedName>
    <alternativeName>
        <fullName>CD20 antigen-like 3</fullName>
    </alternativeName>
    <alternativeName>
        <fullName>Four-span transmembrane protein 3</fullName>
    </alternativeName>
</protein>
<feature type="chain" id="PRO_0000158638" description="Membrane-spanning 4-domains subfamily A member 6A">
    <location>
        <begin position="1"/>
        <end position="248"/>
    </location>
</feature>
<feature type="topological domain" description="Cytoplasmic" evidence="1">
    <location>
        <begin position="1"/>
        <end position="46"/>
    </location>
</feature>
<feature type="transmembrane region" description="Helical" evidence="1">
    <location>
        <begin position="47"/>
        <end position="67"/>
    </location>
</feature>
<feature type="topological domain" description="Extracellular" evidence="1">
    <location>
        <begin position="68"/>
        <end position="84"/>
    </location>
</feature>
<feature type="transmembrane region" description="Helical" evidence="1">
    <location>
        <begin position="85"/>
        <end position="105"/>
    </location>
</feature>
<feature type="topological domain" description="Cytoplasmic" evidence="1">
    <location>
        <begin position="106"/>
        <end position="116"/>
    </location>
</feature>
<feature type="transmembrane region" description="Helical" evidence="1">
    <location>
        <begin position="117"/>
        <end position="137"/>
    </location>
</feature>
<feature type="topological domain" description="Extracellular" evidence="1">
    <location>
        <begin position="138"/>
        <end position="185"/>
    </location>
</feature>
<feature type="transmembrane region" description="Helical" evidence="1">
    <location>
        <begin position="186"/>
        <end position="206"/>
    </location>
</feature>
<feature type="topological domain" description="Cytoplasmic" evidence="1">
    <location>
        <begin position="207"/>
        <end position="248"/>
    </location>
</feature>
<feature type="splice variant" id="VSP_056732" description="In isoform 5." evidence="8">
    <original>M</original>
    <variation>MVLLKLLEVYRKGSAGTFHKSTIFGNTIM</variation>
    <location>
        <position position="1"/>
    </location>
</feature>
<feature type="splice variant" id="VSP_041191" description="In isoform 4." evidence="7">
    <original>FIISGSLSIATEKRLTKLLVHSSLVGSILSALSALVGFIILSVKQAT</original>
    <variation>VSRVSEEGRMGQRGEEDANSLDFPPASLLCLICQEQGVNGESCSPVG</variation>
    <location>
        <begin position="95"/>
        <end position="141"/>
    </location>
</feature>
<feature type="splice variant" id="VSP_041192" description="In isoform 4." evidence="7">
    <location>
        <begin position="142"/>
        <end position="248"/>
    </location>
</feature>
<feature type="splice variant" id="VSP_007383" description="In isoform 3." evidence="3">
    <original>CELDKNNIPTRSYVSYFYHDSLYTTDCYTA</original>
    <variation>WNSLSDADLHSAGILPSCAHCCAAVETGLL</variation>
    <location>
        <begin position="149"/>
        <end position="178"/>
    </location>
</feature>
<feature type="splice variant" id="VSP_007384" description="In isoform 3." evidence="3">
    <location>
        <begin position="179"/>
        <end position="248"/>
    </location>
</feature>
<feature type="splice variant" id="VSP_007381" description="In isoform 2 and isoform 5." evidence="4 5 6">
    <original>SVLFLPHS</original>
    <variation>VSVLAGFT</variation>
    <location>
        <begin position="218"/>
        <end position="225"/>
    </location>
</feature>
<feature type="splice variant" id="VSP_007382" description="In isoform 2 and isoform 5." evidence="4 5 6">
    <location>
        <begin position="226"/>
        <end position="248"/>
    </location>
</feature>
<feature type="sequence variant" id="VAR_015652" description="In dbSNP:rs1440597159." evidence="2">
    <original>A</original>
    <variation>S</variation>
    <location>
        <position position="183"/>
    </location>
</feature>
<feature type="sequence variant" id="VAR_015653" description="In dbSNP:rs7232." evidence="2">
    <original>T</original>
    <variation>S</variation>
    <location>
        <position position="185"/>
    </location>
</feature>
<feature type="sequence conflict" description="In Ref. 6; AAL56222/AAL56223." evidence="8" ref="6">
    <original>K</original>
    <variation>R</variation>
    <location>
        <position position="107"/>
    </location>
</feature>
<feature type="sequence conflict" description="In Ref. 6; AAL56222/AAL56223." evidence="8" ref="6">
    <original>T</original>
    <variation>S</variation>
    <location>
        <position position="110"/>
    </location>
</feature>
<feature type="sequence conflict" description="In Ref. 6; AAL56222." evidence="8" ref="6">
    <original>S</original>
    <variation>R</variation>
    <location>
        <position position="225"/>
    </location>
</feature>
<gene>
    <name type="primary">MS4A6A</name>
    <name type="synonym">4SPAN3</name>
    <name type="synonym">CD20L3</name>
    <name type="synonym">MS4A6</name>
    <name type="ORF">CDA01</name>
    <name type="ORF">MSTP090</name>
</gene>
<proteinExistence type="evidence at protein level"/>
<accession>Q9H2W1</accession>
<accession>A8K755</accession>
<accession>F8W9K1</accession>
<accession>Q7Z4E8</accession>
<accession>Q8TBV7</accession>
<accession>Q8TEZ4</accession>
<accession>Q8TEZ5</accession>
<accession>Q96PG6</accession>
<accession>Q9H2L1</accession>
<accession>Q9H2N3</accession>
<accession>Q9H3V1</accession>
<accession>Q9HC76</accession>
<sequence length="248" mass="26943">MTSQPVPNETIIVLPSNVINFSQAEKPEPTNQGQDSLKKHLHAEIKVIGTIQILCGMMVLSLGIILASASFSPNFTQVTSTLLNSAYPFIGPFFFIISGSLSIATEKRLTKLLVHSSLVGSILSALSALVGFIILSVKQATLNPASLQCELDKNNIPTRSYVSYFYHDSLYTTDCYTAKASLAGTLSLMLICTLLEFCLAVLTAVLRWKQAYSDFPGSVLFLPHSYIGNSGMSSKMTHDCGYEELLTS</sequence>